<keyword id="KW-0067">ATP-binding</keyword>
<keyword id="KW-0143">Chaperone</keyword>
<keyword id="KW-0547">Nucleotide-binding</keyword>
<evidence type="ECO:0000255" key="1">
    <source>
        <dbReference type="HAMAP-Rule" id="MF_00679"/>
    </source>
</evidence>
<organism>
    <name type="scientific">Ruthia magnifica subsp. Calyptogena magnifica</name>
    <dbReference type="NCBI Taxonomy" id="413404"/>
    <lineage>
        <taxon>Bacteria</taxon>
        <taxon>Pseudomonadati</taxon>
        <taxon>Pseudomonadota</taxon>
        <taxon>Gammaproteobacteria</taxon>
        <taxon>Candidatus Pseudothioglobaceae</taxon>
        <taxon>Candidatus Ruthturnera</taxon>
    </lineage>
</organism>
<proteinExistence type="inferred from homology"/>
<sequence length="614" mass="67093">MALLQISEPGQVSAIHQHKLAIGIDLGTTNSLVASVMSGQSKVLIHENNETILPSVVHCGKDNKLTVGCNAYHYAKTDPTNTIISVKRFMGMSYKEVSTFKNCPYQLLENGNNVLFHTATGDLSAVEISASILASLKQCAEKSLGGALFGAVITVPAYFNDAQRQATKDAATLAGLKTLRLLNEPTAAAVAYGLESGEEGVHAIYDLGGGTFDISILSFSKGVFKVLAISGDSTLGGDDFDALIVDDCIKQLGINKLTPTQMQKIKQFSRTAKETLSNHEFAKFNCIEKSYRITKKKFEILAKVLIKRTLLLTKRAIRDAQVDVEDIKDIIMVGGSTRMPLVRFMVSDLFNKPVLCSINPDEVVAKGAAIQANILAGNKSQGDVLLLDVLPLSLGLETMGGLVEKVIHRNTTIPIIRAQEFTTFKDGQTAMSVHVLQGERELVKDCRSLAKFDLQGIPPMVAGSARIQIEFQVDTDGLLSVSAVEQISGVKTNITIKPSYGLTDVQMEKMLKDSILFAKTDIQTRQLHETQVEANRTIQAIDLALKKDKHMLDVKMLNNILTARTILFNMAHSDDEKAIKTALENLENTCSKFVEMRMNNTVMKAMQGHNVDEF</sequence>
<reference key="1">
    <citation type="journal article" date="2007" name="Science">
        <title>The Calyptogena magnifica chemoautotrophic symbiont genome.</title>
        <authorList>
            <person name="Newton I.L.G."/>
            <person name="Woyke T."/>
            <person name="Auchtung T.A."/>
            <person name="Dilly G.F."/>
            <person name="Dutton R.J."/>
            <person name="Fisher M.C."/>
            <person name="Fontanez K.M."/>
            <person name="Lau E."/>
            <person name="Stewart F.J."/>
            <person name="Richardson P.M."/>
            <person name="Barry K.W."/>
            <person name="Saunders E."/>
            <person name="Detter J.C."/>
            <person name="Wu D."/>
            <person name="Eisen J.A."/>
            <person name="Cavanaugh C.M."/>
        </authorList>
    </citation>
    <scope>NUCLEOTIDE SEQUENCE [LARGE SCALE GENOMIC DNA]</scope>
</reference>
<protein>
    <recommendedName>
        <fullName evidence="1">Chaperone protein HscA homolog</fullName>
    </recommendedName>
</protein>
<name>HSCA_RUTMC</name>
<gene>
    <name evidence="1" type="primary">hscA</name>
    <name type="ordered locus">Rmag_0573</name>
</gene>
<comment type="function">
    <text evidence="1">Chaperone involved in the maturation of iron-sulfur cluster-containing proteins. Has a low intrinsic ATPase activity which is markedly stimulated by HscB.</text>
</comment>
<comment type="similarity">
    <text evidence="1">Belongs to the heat shock protein 70 family.</text>
</comment>
<accession>A1AWL7</accession>
<dbReference type="EMBL" id="CP000488">
    <property type="protein sequence ID" value="ABL02324.1"/>
    <property type="molecule type" value="Genomic_DNA"/>
</dbReference>
<dbReference type="RefSeq" id="WP_011737949.1">
    <property type="nucleotide sequence ID" value="NC_008610.1"/>
</dbReference>
<dbReference type="SMR" id="A1AWL7"/>
<dbReference type="STRING" id="413404.Rmag_0573"/>
<dbReference type="KEGG" id="rma:Rmag_0573"/>
<dbReference type="eggNOG" id="COG0443">
    <property type="taxonomic scope" value="Bacteria"/>
</dbReference>
<dbReference type="HOGENOM" id="CLU_005965_2_4_6"/>
<dbReference type="OrthoDB" id="9766019at2"/>
<dbReference type="Proteomes" id="UP000002587">
    <property type="component" value="Chromosome"/>
</dbReference>
<dbReference type="GO" id="GO:0005524">
    <property type="term" value="F:ATP binding"/>
    <property type="evidence" value="ECO:0007669"/>
    <property type="project" value="UniProtKB-KW"/>
</dbReference>
<dbReference type="GO" id="GO:0016887">
    <property type="term" value="F:ATP hydrolysis activity"/>
    <property type="evidence" value="ECO:0007669"/>
    <property type="project" value="UniProtKB-UniRule"/>
</dbReference>
<dbReference type="GO" id="GO:0140662">
    <property type="term" value="F:ATP-dependent protein folding chaperone"/>
    <property type="evidence" value="ECO:0007669"/>
    <property type="project" value="InterPro"/>
</dbReference>
<dbReference type="GO" id="GO:0051082">
    <property type="term" value="F:unfolded protein binding"/>
    <property type="evidence" value="ECO:0007669"/>
    <property type="project" value="InterPro"/>
</dbReference>
<dbReference type="GO" id="GO:0016226">
    <property type="term" value="P:iron-sulfur cluster assembly"/>
    <property type="evidence" value="ECO:0007669"/>
    <property type="project" value="InterPro"/>
</dbReference>
<dbReference type="CDD" id="cd10236">
    <property type="entry name" value="ASKHA_NBD_HSP70_HscA"/>
    <property type="match status" value="1"/>
</dbReference>
<dbReference type="FunFam" id="3.30.420.40:FF:000046">
    <property type="entry name" value="Chaperone protein HscA"/>
    <property type="match status" value="1"/>
</dbReference>
<dbReference type="FunFam" id="2.60.34.10:FF:000005">
    <property type="entry name" value="Chaperone protein HscA homolog"/>
    <property type="match status" value="1"/>
</dbReference>
<dbReference type="Gene3D" id="1.20.1270.10">
    <property type="match status" value="1"/>
</dbReference>
<dbReference type="Gene3D" id="3.30.420.40">
    <property type="match status" value="2"/>
</dbReference>
<dbReference type="Gene3D" id="3.90.640.10">
    <property type="entry name" value="Actin, Chain A, domain 4"/>
    <property type="match status" value="1"/>
</dbReference>
<dbReference type="Gene3D" id="2.60.34.10">
    <property type="entry name" value="Substrate Binding Domain Of DNAk, Chain A, domain 1"/>
    <property type="match status" value="1"/>
</dbReference>
<dbReference type="HAMAP" id="MF_00679">
    <property type="entry name" value="HscA"/>
    <property type="match status" value="1"/>
</dbReference>
<dbReference type="InterPro" id="IPR043129">
    <property type="entry name" value="ATPase_NBD"/>
</dbReference>
<dbReference type="InterPro" id="IPR018181">
    <property type="entry name" value="Heat_shock_70_CS"/>
</dbReference>
<dbReference type="InterPro" id="IPR042039">
    <property type="entry name" value="HscA_NBD"/>
</dbReference>
<dbReference type="InterPro" id="IPR029048">
    <property type="entry name" value="HSP70_C_sf"/>
</dbReference>
<dbReference type="InterPro" id="IPR029047">
    <property type="entry name" value="HSP70_peptide-bd_sf"/>
</dbReference>
<dbReference type="InterPro" id="IPR013126">
    <property type="entry name" value="Hsp_70_fam"/>
</dbReference>
<dbReference type="InterPro" id="IPR010236">
    <property type="entry name" value="ISC_FeS_clus_asmbl_HscA"/>
</dbReference>
<dbReference type="NCBIfam" id="TIGR01991">
    <property type="entry name" value="HscA"/>
    <property type="match status" value="1"/>
</dbReference>
<dbReference type="NCBIfam" id="NF003520">
    <property type="entry name" value="PRK05183.1"/>
    <property type="match status" value="1"/>
</dbReference>
<dbReference type="PANTHER" id="PTHR19375">
    <property type="entry name" value="HEAT SHOCK PROTEIN 70KDA"/>
    <property type="match status" value="1"/>
</dbReference>
<dbReference type="Pfam" id="PF00012">
    <property type="entry name" value="HSP70"/>
    <property type="match status" value="1"/>
</dbReference>
<dbReference type="PRINTS" id="PR00301">
    <property type="entry name" value="HEATSHOCK70"/>
</dbReference>
<dbReference type="SUPFAM" id="SSF53067">
    <property type="entry name" value="Actin-like ATPase domain"/>
    <property type="match status" value="2"/>
</dbReference>
<dbReference type="SUPFAM" id="SSF100934">
    <property type="entry name" value="Heat shock protein 70kD (HSP70), C-terminal subdomain"/>
    <property type="match status" value="1"/>
</dbReference>
<dbReference type="SUPFAM" id="SSF100920">
    <property type="entry name" value="Heat shock protein 70kD (HSP70), peptide-binding domain"/>
    <property type="match status" value="1"/>
</dbReference>
<dbReference type="PROSITE" id="PS00297">
    <property type="entry name" value="HSP70_1"/>
    <property type="match status" value="1"/>
</dbReference>
<dbReference type="PROSITE" id="PS00329">
    <property type="entry name" value="HSP70_2"/>
    <property type="match status" value="1"/>
</dbReference>
<feature type="chain" id="PRO_1000044883" description="Chaperone protein HscA homolog">
    <location>
        <begin position="1"/>
        <end position="614"/>
    </location>
</feature>